<accession>A9MP23</accession>
<comment type="function">
    <text evidence="1">An essential GTPase which binds GTP, GDP and possibly (p)ppGpp with moderate affinity, with high nucleotide exchange rates and a fairly low GTP hydrolysis rate. Plays a role in control of the cell cycle, stress response, ribosome biogenesis and in those bacteria that undergo differentiation, in morphogenesis control.</text>
</comment>
<comment type="cofactor">
    <cofactor evidence="1">
        <name>Mg(2+)</name>
        <dbReference type="ChEBI" id="CHEBI:18420"/>
    </cofactor>
</comment>
<comment type="subunit">
    <text evidence="1">Monomer.</text>
</comment>
<comment type="subcellular location">
    <subcellularLocation>
        <location evidence="1">Cytoplasm</location>
    </subcellularLocation>
</comment>
<comment type="similarity">
    <text evidence="1">Belongs to the TRAFAC class OBG-HflX-like GTPase superfamily. OBG GTPase family.</text>
</comment>
<keyword id="KW-0963">Cytoplasm</keyword>
<keyword id="KW-0342">GTP-binding</keyword>
<keyword id="KW-0378">Hydrolase</keyword>
<keyword id="KW-0460">Magnesium</keyword>
<keyword id="KW-0479">Metal-binding</keyword>
<keyword id="KW-0547">Nucleotide-binding</keyword>
<keyword id="KW-1185">Reference proteome</keyword>
<proteinExistence type="inferred from homology"/>
<reference key="1">
    <citation type="submission" date="2007-11" db="EMBL/GenBank/DDBJ databases">
        <authorList>
            <consortium name="The Salmonella enterica serovar Arizonae Genome Sequencing Project"/>
            <person name="McClelland M."/>
            <person name="Sanderson E.K."/>
            <person name="Porwollik S."/>
            <person name="Spieth J."/>
            <person name="Clifton W.S."/>
            <person name="Fulton R."/>
            <person name="Chunyan W."/>
            <person name="Wollam A."/>
            <person name="Shah N."/>
            <person name="Pepin K."/>
            <person name="Bhonagiri V."/>
            <person name="Nash W."/>
            <person name="Johnson M."/>
            <person name="Thiruvilangam P."/>
            <person name="Wilson R."/>
        </authorList>
    </citation>
    <scope>NUCLEOTIDE SEQUENCE [LARGE SCALE GENOMIC DNA]</scope>
    <source>
        <strain>ATCC BAA-731 / CDC346-86 / RSK2980</strain>
    </source>
</reference>
<dbReference type="EC" id="3.6.5.-" evidence="1"/>
<dbReference type="EMBL" id="CP000880">
    <property type="protein sequence ID" value="ABX24105.1"/>
    <property type="molecule type" value="Genomic_DNA"/>
</dbReference>
<dbReference type="SMR" id="A9MP23"/>
<dbReference type="STRING" id="41514.SARI_04323"/>
<dbReference type="KEGG" id="ses:SARI_04323"/>
<dbReference type="HOGENOM" id="CLU_011747_2_0_6"/>
<dbReference type="Proteomes" id="UP000002084">
    <property type="component" value="Chromosome"/>
</dbReference>
<dbReference type="GO" id="GO:0005737">
    <property type="term" value="C:cytoplasm"/>
    <property type="evidence" value="ECO:0007669"/>
    <property type="project" value="UniProtKB-SubCell"/>
</dbReference>
<dbReference type="GO" id="GO:0005525">
    <property type="term" value="F:GTP binding"/>
    <property type="evidence" value="ECO:0007669"/>
    <property type="project" value="UniProtKB-UniRule"/>
</dbReference>
<dbReference type="GO" id="GO:0003924">
    <property type="term" value="F:GTPase activity"/>
    <property type="evidence" value="ECO:0007669"/>
    <property type="project" value="UniProtKB-UniRule"/>
</dbReference>
<dbReference type="GO" id="GO:0000287">
    <property type="term" value="F:magnesium ion binding"/>
    <property type="evidence" value="ECO:0007669"/>
    <property type="project" value="InterPro"/>
</dbReference>
<dbReference type="GO" id="GO:0042254">
    <property type="term" value="P:ribosome biogenesis"/>
    <property type="evidence" value="ECO:0007669"/>
    <property type="project" value="UniProtKB-UniRule"/>
</dbReference>
<dbReference type="CDD" id="cd01898">
    <property type="entry name" value="Obg"/>
    <property type="match status" value="1"/>
</dbReference>
<dbReference type="FunFam" id="2.70.210.12:FF:000001">
    <property type="entry name" value="GTPase Obg"/>
    <property type="match status" value="1"/>
</dbReference>
<dbReference type="FunFam" id="3.40.50.300:FF:000185">
    <property type="entry name" value="GTPase Obg"/>
    <property type="match status" value="1"/>
</dbReference>
<dbReference type="Gene3D" id="2.70.210.12">
    <property type="entry name" value="GTP1/OBG domain"/>
    <property type="match status" value="1"/>
</dbReference>
<dbReference type="Gene3D" id="3.40.50.300">
    <property type="entry name" value="P-loop containing nucleotide triphosphate hydrolases"/>
    <property type="match status" value="1"/>
</dbReference>
<dbReference type="HAMAP" id="MF_01454">
    <property type="entry name" value="GTPase_Obg"/>
    <property type="match status" value="1"/>
</dbReference>
<dbReference type="InterPro" id="IPR031167">
    <property type="entry name" value="G_OBG"/>
</dbReference>
<dbReference type="InterPro" id="IPR006073">
    <property type="entry name" value="GTP-bd"/>
</dbReference>
<dbReference type="InterPro" id="IPR014100">
    <property type="entry name" value="GTP-bd_Obg/CgtA"/>
</dbReference>
<dbReference type="InterPro" id="IPR006074">
    <property type="entry name" value="GTP1-OBG_CS"/>
</dbReference>
<dbReference type="InterPro" id="IPR006169">
    <property type="entry name" value="GTP1_OBG_dom"/>
</dbReference>
<dbReference type="InterPro" id="IPR036726">
    <property type="entry name" value="GTP1_OBG_dom_sf"/>
</dbReference>
<dbReference type="InterPro" id="IPR045086">
    <property type="entry name" value="OBG_GTPase"/>
</dbReference>
<dbReference type="InterPro" id="IPR027417">
    <property type="entry name" value="P-loop_NTPase"/>
</dbReference>
<dbReference type="NCBIfam" id="TIGR02729">
    <property type="entry name" value="Obg_CgtA"/>
    <property type="match status" value="1"/>
</dbReference>
<dbReference type="NCBIfam" id="NF008955">
    <property type="entry name" value="PRK12297.1"/>
    <property type="match status" value="1"/>
</dbReference>
<dbReference type="NCBIfam" id="NF008956">
    <property type="entry name" value="PRK12299.1"/>
    <property type="match status" value="1"/>
</dbReference>
<dbReference type="PANTHER" id="PTHR11702">
    <property type="entry name" value="DEVELOPMENTALLY REGULATED GTP-BINDING PROTEIN-RELATED"/>
    <property type="match status" value="1"/>
</dbReference>
<dbReference type="PANTHER" id="PTHR11702:SF31">
    <property type="entry name" value="MITOCHONDRIAL RIBOSOME-ASSOCIATED GTPASE 2"/>
    <property type="match status" value="1"/>
</dbReference>
<dbReference type="Pfam" id="PF01018">
    <property type="entry name" value="GTP1_OBG"/>
    <property type="match status" value="1"/>
</dbReference>
<dbReference type="Pfam" id="PF01926">
    <property type="entry name" value="MMR_HSR1"/>
    <property type="match status" value="1"/>
</dbReference>
<dbReference type="PIRSF" id="PIRSF002401">
    <property type="entry name" value="GTP_bd_Obg/CgtA"/>
    <property type="match status" value="1"/>
</dbReference>
<dbReference type="PRINTS" id="PR00326">
    <property type="entry name" value="GTP1OBG"/>
</dbReference>
<dbReference type="SUPFAM" id="SSF82051">
    <property type="entry name" value="Obg GTP-binding protein N-terminal domain"/>
    <property type="match status" value="1"/>
</dbReference>
<dbReference type="SUPFAM" id="SSF52540">
    <property type="entry name" value="P-loop containing nucleoside triphosphate hydrolases"/>
    <property type="match status" value="1"/>
</dbReference>
<dbReference type="PROSITE" id="PS51710">
    <property type="entry name" value="G_OBG"/>
    <property type="match status" value="1"/>
</dbReference>
<dbReference type="PROSITE" id="PS00905">
    <property type="entry name" value="GTP1_OBG"/>
    <property type="match status" value="1"/>
</dbReference>
<dbReference type="PROSITE" id="PS51883">
    <property type="entry name" value="OBG"/>
    <property type="match status" value="1"/>
</dbReference>
<gene>
    <name evidence="1" type="primary">obg</name>
    <name type="ordered locus">SARI_04323</name>
</gene>
<sequence length="391" mass="43201">MKFVDEASILVVAGDGGNGCVSFRREKYIPKGGPDGGDGGDGGDVWLEADENLNTLIDYRFEKSFRAERGQNGASRDCTGKRGKDVTIKVPVGTRVIDQGTGETMGDMTKHGQRLLVAKGGWHGLGNTRFKSSVNRTPRQKTNGTPGDKRDLLLELMLLADVGMLGMPNAGKSTFIRAVSAAKPKVADYPFTTLVPSLGVVRMDSEKSFVVADIPGLIEGAAEGAGLGIRFLKHLERCRVLLHLIDIDPIDGSDPVENARIIIGELEKYSQDLAAKPRWLVFNKIDLMDKTEAEEKAKSIAEALGWEGKYYLISAASQLGVKDLCWDVMTFIIENPIAQAEEAKQPEKVEFMWDDYHRQQLDEVAAEAEDEEWDDDWDEDDEEGVEFIYKR</sequence>
<protein>
    <recommendedName>
        <fullName evidence="1">GTPase Obg</fullName>
        <ecNumber evidence="1">3.6.5.-</ecNumber>
    </recommendedName>
    <alternativeName>
        <fullName evidence="1">GTP-binding protein Obg</fullName>
    </alternativeName>
</protein>
<evidence type="ECO:0000255" key="1">
    <source>
        <dbReference type="HAMAP-Rule" id="MF_01454"/>
    </source>
</evidence>
<evidence type="ECO:0000255" key="2">
    <source>
        <dbReference type="PROSITE-ProRule" id="PRU01231"/>
    </source>
</evidence>
<evidence type="ECO:0000256" key="3">
    <source>
        <dbReference type="SAM" id="MobiDB-lite"/>
    </source>
</evidence>
<organism>
    <name type="scientific">Salmonella arizonae (strain ATCC BAA-731 / CDC346-86 / RSK2980)</name>
    <dbReference type="NCBI Taxonomy" id="41514"/>
    <lineage>
        <taxon>Bacteria</taxon>
        <taxon>Pseudomonadati</taxon>
        <taxon>Pseudomonadota</taxon>
        <taxon>Gammaproteobacteria</taxon>
        <taxon>Enterobacterales</taxon>
        <taxon>Enterobacteriaceae</taxon>
        <taxon>Salmonella</taxon>
    </lineage>
</organism>
<name>OBG_SALAR</name>
<feature type="chain" id="PRO_0000386220" description="GTPase Obg">
    <location>
        <begin position="1"/>
        <end position="391"/>
    </location>
</feature>
<feature type="domain" description="Obg" evidence="2">
    <location>
        <begin position="1"/>
        <end position="159"/>
    </location>
</feature>
<feature type="domain" description="OBG-type G" evidence="1">
    <location>
        <begin position="160"/>
        <end position="333"/>
    </location>
</feature>
<feature type="region of interest" description="Disordered" evidence="3">
    <location>
        <begin position="127"/>
        <end position="147"/>
    </location>
</feature>
<feature type="compositionally biased region" description="Polar residues" evidence="3">
    <location>
        <begin position="129"/>
        <end position="145"/>
    </location>
</feature>
<feature type="binding site" evidence="1">
    <location>
        <begin position="166"/>
        <end position="173"/>
    </location>
    <ligand>
        <name>GTP</name>
        <dbReference type="ChEBI" id="CHEBI:37565"/>
    </ligand>
</feature>
<feature type="binding site" evidence="1">
    <location>
        <position position="173"/>
    </location>
    <ligand>
        <name>Mg(2+)</name>
        <dbReference type="ChEBI" id="CHEBI:18420"/>
    </ligand>
</feature>
<feature type="binding site" evidence="1">
    <location>
        <begin position="191"/>
        <end position="195"/>
    </location>
    <ligand>
        <name>GTP</name>
        <dbReference type="ChEBI" id="CHEBI:37565"/>
    </ligand>
</feature>
<feature type="binding site" evidence="1">
    <location>
        <position position="193"/>
    </location>
    <ligand>
        <name>Mg(2+)</name>
        <dbReference type="ChEBI" id="CHEBI:18420"/>
    </ligand>
</feature>
<feature type="binding site" evidence="1">
    <location>
        <begin position="213"/>
        <end position="216"/>
    </location>
    <ligand>
        <name>GTP</name>
        <dbReference type="ChEBI" id="CHEBI:37565"/>
    </ligand>
</feature>
<feature type="binding site" evidence="1">
    <location>
        <begin position="283"/>
        <end position="286"/>
    </location>
    <ligand>
        <name>GTP</name>
        <dbReference type="ChEBI" id="CHEBI:37565"/>
    </ligand>
</feature>
<feature type="binding site" evidence="1">
    <location>
        <begin position="314"/>
        <end position="316"/>
    </location>
    <ligand>
        <name>GTP</name>
        <dbReference type="ChEBI" id="CHEBI:37565"/>
    </ligand>
</feature>